<accession>Q9DWR1</accession>
<dbReference type="EC" id="3.6.1.15"/>
<dbReference type="EC" id="3.4.22.28" evidence="4"/>
<dbReference type="EC" id="2.7.7.48" evidence="4"/>
<dbReference type="EMBL" id="AJ299464">
    <property type="protein sequence ID" value="CAC14074.3"/>
    <property type="status" value="ALT_INIT"/>
    <property type="molecule type" value="Genomic_RNA"/>
</dbReference>
<dbReference type="SMR" id="Q9DWR1"/>
<dbReference type="MEROPS" id="C03.005"/>
<dbReference type="Proteomes" id="UP000007905">
    <property type="component" value="Genome"/>
</dbReference>
<dbReference type="GO" id="GO:0044162">
    <property type="term" value="C:host cell cytoplasmic vesicle membrane"/>
    <property type="evidence" value="ECO:0007669"/>
    <property type="project" value="UniProtKB-SubCell"/>
</dbReference>
<dbReference type="GO" id="GO:0044193">
    <property type="term" value="C:host cell mitochondrial outer membrane"/>
    <property type="evidence" value="ECO:0007669"/>
    <property type="project" value="UniProtKB-SubCell"/>
</dbReference>
<dbReference type="GO" id="GO:0072494">
    <property type="term" value="C:host multivesicular body"/>
    <property type="evidence" value="ECO:0007669"/>
    <property type="project" value="UniProtKB-SubCell"/>
</dbReference>
<dbReference type="GO" id="GO:0016020">
    <property type="term" value="C:membrane"/>
    <property type="evidence" value="ECO:0007669"/>
    <property type="project" value="UniProtKB-KW"/>
</dbReference>
<dbReference type="GO" id="GO:0039618">
    <property type="term" value="C:T=pseudo3 icosahedral viral capsid"/>
    <property type="evidence" value="ECO:0007669"/>
    <property type="project" value="UniProtKB-KW"/>
</dbReference>
<dbReference type="GO" id="GO:0005524">
    <property type="term" value="F:ATP binding"/>
    <property type="evidence" value="ECO:0007669"/>
    <property type="project" value="UniProtKB-KW"/>
</dbReference>
<dbReference type="GO" id="GO:0015267">
    <property type="term" value="F:channel activity"/>
    <property type="evidence" value="ECO:0007669"/>
    <property type="project" value="UniProtKB-KW"/>
</dbReference>
<dbReference type="GO" id="GO:0004197">
    <property type="term" value="F:cysteine-type endopeptidase activity"/>
    <property type="evidence" value="ECO:0007669"/>
    <property type="project" value="UniProtKB-EC"/>
</dbReference>
<dbReference type="GO" id="GO:0017111">
    <property type="term" value="F:ribonucleoside triphosphate phosphatase activity"/>
    <property type="evidence" value="ECO:0007669"/>
    <property type="project" value="UniProtKB-EC"/>
</dbReference>
<dbReference type="GO" id="GO:0003723">
    <property type="term" value="F:RNA binding"/>
    <property type="evidence" value="ECO:0007669"/>
    <property type="project" value="UniProtKB-KW"/>
</dbReference>
<dbReference type="GO" id="GO:0003724">
    <property type="term" value="F:RNA helicase activity"/>
    <property type="evidence" value="ECO:0007669"/>
    <property type="project" value="InterPro"/>
</dbReference>
<dbReference type="GO" id="GO:0003968">
    <property type="term" value="F:RNA-directed RNA polymerase activity"/>
    <property type="evidence" value="ECO:0007669"/>
    <property type="project" value="UniProtKB-KW"/>
</dbReference>
<dbReference type="GO" id="GO:0005198">
    <property type="term" value="F:structural molecule activity"/>
    <property type="evidence" value="ECO:0007669"/>
    <property type="project" value="InterPro"/>
</dbReference>
<dbReference type="GO" id="GO:0006351">
    <property type="term" value="P:DNA-templated transcription"/>
    <property type="evidence" value="ECO:0007669"/>
    <property type="project" value="InterPro"/>
</dbReference>
<dbReference type="GO" id="GO:0034220">
    <property type="term" value="P:monoatomic ion transmembrane transport"/>
    <property type="evidence" value="ECO:0007669"/>
    <property type="project" value="UniProtKB-KW"/>
</dbReference>
<dbReference type="GO" id="GO:0006508">
    <property type="term" value="P:proteolysis"/>
    <property type="evidence" value="ECO:0007669"/>
    <property type="project" value="UniProtKB-KW"/>
</dbReference>
<dbReference type="GO" id="GO:0046718">
    <property type="term" value="P:symbiont entry into host cell"/>
    <property type="evidence" value="ECO:0007669"/>
    <property type="project" value="UniProtKB-KW"/>
</dbReference>
<dbReference type="GO" id="GO:0039545">
    <property type="term" value="P:symbiont-mediated suppression of host cytoplasmic pattern recognition receptor signaling pathway via inhibition of MAVS activity"/>
    <property type="evidence" value="ECO:0007669"/>
    <property type="project" value="UniProtKB-KW"/>
</dbReference>
<dbReference type="GO" id="GO:0039694">
    <property type="term" value="P:viral RNA genome replication"/>
    <property type="evidence" value="ECO:0007669"/>
    <property type="project" value="InterPro"/>
</dbReference>
<dbReference type="GO" id="GO:0019062">
    <property type="term" value="P:virion attachment to host cell"/>
    <property type="evidence" value="ECO:0007669"/>
    <property type="project" value="UniProtKB-KW"/>
</dbReference>
<dbReference type="CDD" id="cd23215">
    <property type="entry name" value="Hepatovirus_RdRp"/>
    <property type="match status" value="1"/>
</dbReference>
<dbReference type="CDD" id="cd00205">
    <property type="entry name" value="rhv_like"/>
    <property type="match status" value="2"/>
</dbReference>
<dbReference type="FunFam" id="2.60.120.20:FF:000016">
    <property type="entry name" value="Genome polyprotein"/>
    <property type="match status" value="1"/>
</dbReference>
<dbReference type="Gene3D" id="1.20.960.20">
    <property type="match status" value="1"/>
</dbReference>
<dbReference type="Gene3D" id="2.60.120.20">
    <property type="match status" value="3"/>
</dbReference>
<dbReference type="Gene3D" id="3.30.70.270">
    <property type="match status" value="1"/>
</dbReference>
<dbReference type="Gene3D" id="2.40.10.10">
    <property type="entry name" value="Trypsin-like serine proteases"/>
    <property type="match status" value="2"/>
</dbReference>
<dbReference type="InterPro" id="IPR049133">
    <property type="entry name" value="2B_soluble"/>
</dbReference>
<dbReference type="InterPro" id="IPR043502">
    <property type="entry name" value="DNA/RNA_pol_sf"/>
</dbReference>
<dbReference type="InterPro" id="IPR004004">
    <property type="entry name" value="Helic/Pol/Pept_Calicivir-typ"/>
</dbReference>
<dbReference type="InterPro" id="IPR000605">
    <property type="entry name" value="Helicase_SF3_ssDNA/RNA_vir"/>
</dbReference>
<dbReference type="InterPro" id="IPR014759">
    <property type="entry name" value="Helicase_SF3_ssRNA_vir"/>
</dbReference>
<dbReference type="InterPro" id="IPR024354">
    <property type="entry name" value="Hepatitis_A_VP1-2A"/>
</dbReference>
<dbReference type="InterPro" id="IPR044067">
    <property type="entry name" value="PCV_3C_PRO"/>
</dbReference>
<dbReference type="InterPro" id="IPR000199">
    <property type="entry name" value="Peptidase_C3A/C3B_picornavir"/>
</dbReference>
<dbReference type="InterPro" id="IPR009003">
    <property type="entry name" value="Peptidase_S1_PA"/>
</dbReference>
<dbReference type="InterPro" id="IPR043504">
    <property type="entry name" value="Peptidase_S1_PA_chymotrypsin"/>
</dbReference>
<dbReference type="InterPro" id="IPR001676">
    <property type="entry name" value="Picornavirus_capsid"/>
</dbReference>
<dbReference type="InterPro" id="IPR043128">
    <property type="entry name" value="Rev_trsase/Diguanyl_cyclase"/>
</dbReference>
<dbReference type="InterPro" id="IPR033703">
    <property type="entry name" value="Rhv-like"/>
</dbReference>
<dbReference type="InterPro" id="IPR001205">
    <property type="entry name" value="RNA-dir_pol_C"/>
</dbReference>
<dbReference type="InterPro" id="IPR007094">
    <property type="entry name" value="RNA-dir_pol_PSvirus"/>
</dbReference>
<dbReference type="InterPro" id="IPR029053">
    <property type="entry name" value="Viral_coat"/>
</dbReference>
<dbReference type="Pfam" id="PF20758">
    <property type="entry name" value="2B_soluble"/>
    <property type="match status" value="1"/>
</dbReference>
<dbReference type="Pfam" id="PF12944">
    <property type="entry name" value="HAV_VP"/>
    <property type="match status" value="1"/>
</dbReference>
<dbReference type="Pfam" id="PF00548">
    <property type="entry name" value="Peptidase_C3"/>
    <property type="match status" value="1"/>
</dbReference>
<dbReference type="Pfam" id="PF00680">
    <property type="entry name" value="RdRP_1"/>
    <property type="match status" value="1"/>
</dbReference>
<dbReference type="Pfam" id="PF00073">
    <property type="entry name" value="Rhv"/>
    <property type="match status" value="2"/>
</dbReference>
<dbReference type="Pfam" id="PF00910">
    <property type="entry name" value="RNA_helicase"/>
    <property type="match status" value="1"/>
</dbReference>
<dbReference type="PRINTS" id="PR00918">
    <property type="entry name" value="CALICVIRUSNS"/>
</dbReference>
<dbReference type="SUPFAM" id="SSF56672">
    <property type="entry name" value="DNA/RNA polymerases"/>
    <property type="match status" value="1"/>
</dbReference>
<dbReference type="SUPFAM" id="SSF88633">
    <property type="entry name" value="Positive stranded ssRNA viruses"/>
    <property type="match status" value="3"/>
</dbReference>
<dbReference type="SUPFAM" id="SSF50494">
    <property type="entry name" value="Trypsin-like serine proteases"/>
    <property type="match status" value="1"/>
</dbReference>
<dbReference type="PROSITE" id="PS51874">
    <property type="entry name" value="PCV_3C_PRO"/>
    <property type="match status" value="1"/>
</dbReference>
<dbReference type="PROSITE" id="PS50507">
    <property type="entry name" value="RDRP_SSRNA_POS"/>
    <property type="match status" value="1"/>
</dbReference>
<dbReference type="PROSITE" id="PS51218">
    <property type="entry name" value="SF3_HELICASE_2"/>
    <property type="match status" value="1"/>
</dbReference>
<comment type="function">
    <molecule>Capsid protein VP1</molecule>
    <text evidence="4">Capsid proteins VP1, VP2, and VP3 form a closed capsid enclosing the viral positive strand RNA genome. All these proteins contain a beta-sheet structure called beta-barrel jelly roll. Together they form an icosahedral capsid (T=3) composed of 60 copies of each VP1, VP2, and VP3, with a diameter of approximately 300 Angstroms. VP1 is situated at the 12 fivefold axes, whereas VP2 and VP3 are located at the quasi-sixfold axes. The naked capsid interacts with the host receptor HAVCR1 to provide virion attachment to and probably entry into the target cell.</text>
</comment>
<comment type="function">
    <molecule>Capsid protein VP2</molecule>
    <text evidence="4">Capsid proteins VP1, VP2, and VP3 form a closed capsid enclosing the viral positive strand RNA genome. All these proteins contain a beta-sheet structure called beta-barrel jelly roll. Together they form an icosahedral capsid (T=3) composed of 60 copies of each VP1, VP2, and VP3, with a diameter of approximately 300 Angstroms. VP1 is situated at the 12 fivefold axes, whereas VP2 and VP3 are located at the quasi-sixfold axes. The naked capsid interacts with the host receptor HAVCR1 to provide virion attachment to and probably entry into the target cell.</text>
</comment>
<comment type="function">
    <molecule>Capsid protein VP3</molecule>
    <text evidence="4">Capsid proteins VP1, VP2, and VP3 form a closed capsid enclosing the viral positive strand RNA genome. All these proteins contain a beta-sheet structure called beta-barrel jelly roll. Together they form an icosahedral capsid (T=3) composed of 60 copies of each VP1, VP2, and VP3, with a diameter of approximately 300 Angstroms. VP1 is situated at the 12 fivefold axes, whereas VP2 and VP3 are located at the quasi-sixfold axes. The naked capsid interacts with the host receptor HAVCR1 to provide virion attachment to and probably entry into the target cell.</text>
</comment>
<comment type="function">
    <molecule>Capsid protein VP0</molecule>
    <text evidence="4">VP0 precursor is a component of the immature procapsids.</text>
</comment>
<comment type="function">
    <molecule>Capsid protein VP4</molecule>
    <text evidence="4">Plays a role in the assembly of the 12 pentamers into an icosahedral structure. Has not been detected in mature virions, supposedly owing to its small size.</text>
</comment>
<comment type="function">
    <molecule>Protein VP1-2A</molecule>
    <text evidence="4">Precursor component of immature procapsids that corresponds to an extended form of the structural protein VP1. After maturation, possibly by the host Cathepsin L, the assembly signal 2A is cleaved to give rise to the mature VP1 protein.</text>
</comment>
<comment type="function">
    <molecule>Protein 2B</molecule>
    <text evidence="4">Functions as a viroporin. Affects membrane integrity and causes an increase in membrane permeability. Involved in host intracellular membrane rearrangements probably to give rise to the viral factories. Does not disrupt calcium homeostasis or glycoprotein trafficking. Antagonizes the innate immune response of the host by suppressing IFN-beta synthesis, which it achieves by interfering with the RIG-I/IFIH1 pathway.</text>
</comment>
<comment type="function">
    <molecule>Protein 2BC</molecule>
    <text evidence="4">Affects membrane integrity and causes an increase in membrane permeability.</text>
</comment>
<comment type="function">
    <molecule>Protein 2C</molecule>
    <text evidence="4">Associates with and induces structural rearrangements of intracellular membranes. Displays RNA-binding activity.</text>
</comment>
<comment type="function">
    <molecule>Protein 3ABC</molecule>
    <text evidence="4">The precursor 3ABC is targeted to the mitochondrial membrane where protease 3C activity cleaves and inhibits the host antiviral protein MAVS, thereby disrupting activation of IRF3 through the IFIH1/MDA5 pathway. In vivo, the protease activity of 3ABC precursor is more efficient in cleaving the 2BC precursor than that of protein 3C. The 3ABC precursor may therefore play a role in the proteolytic processing of the polyprotein. Possible viroporin.</text>
</comment>
<comment type="function">
    <molecule>Protein 3AB</molecule>
    <text evidence="4">Interacts with the 3CD precursor and with RNA structures found at both the 5'- and 3'-termini of the viral genome. Since the 3AB precursor contains the hydrophobic domain 3A, it probably anchors the whole viral replicase complex to intracellular membranes on which viral RNA synthesis occurs.</text>
</comment>
<comment type="function">
    <molecule>Protein 3A</molecule>
    <text evidence="4">May serve as membrane anchor to the 3AB and 3ABC precursors via its hydrophobic domain. May interact with RNA.</text>
</comment>
<comment type="function">
    <molecule>Viral protein genome-linked</molecule>
    <text evidence="2 4">Acts as a primer for viral RNA replication and remains covalently bound to viral genomic RNA. VPg is uridylylated prior to priming replication into VPg-pUpU. The VPg-pUpU is then used as primer on the genomic RNA poly(A) by the RNA-dependent RNA polymerase to replicate the viral genome.</text>
</comment>
<comment type="function">
    <molecule>Protease 3C</molecule>
    <text evidence="4">Cysteine protease that generates mature viral proteins from the precursor polyprotein. In addition to its proteolytic activity, it binds to viral RNA, and thus influences viral genome replication. RNA and substrate bind cooperatively to the protease. Cleaves IKBKG/NEMO to impair innate immune signaling. Cleaves host PABPC1 which may participate in the switch of viral translation to RNA synthesis.</text>
</comment>
<comment type="function">
    <molecule>Protein 3CD</molecule>
    <text evidence="4">Interacts with the 3AB precursor and with RNA structures found at both the 5'- and 3'-termini of the viral genome. Disrupts TLR3 signaling by degrading the host adapter protein TICAM1/TRIF.</text>
</comment>
<comment type="function">
    <text evidence="4">RNA-directed RNA polymerase 3D-POL replicates genomic and antigenomic RNA by recognizing replications specific signals.</text>
</comment>
<comment type="catalytic activity">
    <reaction evidence="4 6">
        <text>RNA(n) + a ribonucleoside 5'-triphosphate = RNA(n+1) + diphosphate</text>
        <dbReference type="Rhea" id="RHEA:21248"/>
        <dbReference type="Rhea" id="RHEA-COMP:14527"/>
        <dbReference type="Rhea" id="RHEA-COMP:17342"/>
        <dbReference type="ChEBI" id="CHEBI:33019"/>
        <dbReference type="ChEBI" id="CHEBI:61557"/>
        <dbReference type="ChEBI" id="CHEBI:140395"/>
        <dbReference type="EC" id="2.7.7.48"/>
    </reaction>
</comment>
<comment type="catalytic activity">
    <reaction evidence="4">
        <text>a ribonucleoside 5'-triphosphate + H2O = a ribonucleoside 5'-diphosphate + phosphate + H(+)</text>
        <dbReference type="Rhea" id="RHEA:23680"/>
        <dbReference type="ChEBI" id="CHEBI:15377"/>
        <dbReference type="ChEBI" id="CHEBI:15378"/>
        <dbReference type="ChEBI" id="CHEBI:43474"/>
        <dbReference type="ChEBI" id="CHEBI:57930"/>
        <dbReference type="ChEBI" id="CHEBI:61557"/>
        <dbReference type="EC" id="3.6.1.15"/>
    </reaction>
</comment>
<comment type="catalytic activity">
    <reaction evidence="8">
        <text>Selective cleavage of Gln-|-Gly bond in the poliovirus polyprotein. In other picornavirus reactions Glu may be substituted for Gln, and Ser or Thr for Gly.</text>
        <dbReference type="EC" id="3.4.22.28"/>
    </reaction>
</comment>
<comment type="subunit">
    <molecule>Protein 2B</molecule>
    <text evidence="4">Homodimer. Homomultimer; probably interacts with membranes in a multimeric form. Seems to assemble into amyloid-like fibers.</text>
</comment>
<comment type="subunit">
    <molecule>Protein 3AB</molecule>
    <text evidence="4">Homodimer. Monomer. Interacts with protein 3CD.</text>
</comment>
<comment type="subunit">
    <molecule>Protein 3A</molecule>
    <text evidence="4">Interacts with host ACBD3 (By similarity).</text>
</comment>
<comment type="subunit">
    <molecule>Protein 3CD</molecule>
    <text evidence="4">Interacts with protein 3AB.</text>
</comment>
<comment type="subunit">
    <molecule>Protein 3ABC</molecule>
    <text evidence="4">Interacts with human MAVS.</text>
</comment>
<comment type="subunit">
    <molecule>Protease 3C</molecule>
    <text evidence="4">Homodimer; disulfide-linked.</text>
</comment>
<comment type="subunit">
    <molecule>Protein VP1-2A</molecule>
    <text evidence="4">Homopentamer. Homooligomer.</text>
</comment>
<comment type="subunit">
    <molecule>Capsid protein VP1</molecule>
    <text evidence="4">Interacts with capsid protein VP2. Interacts with capsid protein VP3.</text>
</comment>
<comment type="subunit">
    <molecule>Capsid protein VP2</molecule>
    <text evidence="4">Interacts with capsid protein VP1. Interacts with capsid protein VP3.</text>
</comment>
<comment type="subunit">
    <molecule>Capsid protein VP3</molecule>
    <text evidence="4">Interacts with capsid protein VP1. Interacts with capsid protein VP2.</text>
</comment>
<comment type="subcellular location">
    <molecule>Capsid protein VP2</molecule>
    <subcellularLocation>
        <location evidence="4">Virion</location>
    </subcellularLocation>
    <subcellularLocation>
        <location evidence="4">Host endosome</location>
        <location evidence="4">Host multivesicular body</location>
    </subcellularLocation>
    <text evidence="4">The egress of newly formed virions occurs through an exosome-like mechanism involving endosomal budding of viral capsids into multivesicular bodies.</text>
</comment>
<comment type="subcellular location">
    <molecule>Capsid protein VP3</molecule>
    <subcellularLocation>
        <location evidence="4">Virion</location>
    </subcellularLocation>
    <subcellularLocation>
        <location evidence="4">Host endosome</location>
        <location evidence="4">Host multivesicular body</location>
    </subcellularLocation>
    <text evidence="4">The egress of newly formed virions occurs through an exosome-like mechanism involving endosomal budding of viral capsids into multivesicular bodies.</text>
</comment>
<comment type="subcellular location">
    <molecule>Capsid protein VP1</molecule>
    <subcellularLocation>
        <location evidence="4">Virion</location>
    </subcellularLocation>
    <subcellularLocation>
        <location evidence="4">Host endosome</location>
        <location evidence="4">Host multivesicular body</location>
    </subcellularLocation>
    <text evidence="4">The egress of newly formed virions occurs through an exosome-like mechanism involving endosomal budding of viral capsids into multivesicular bodies.</text>
</comment>
<comment type="subcellular location">
    <molecule>Capsid protein VP4</molecule>
    <subcellularLocation>
        <location evidence="4">Virion</location>
    </subcellularLocation>
    <text evidence="4">Present in the full mature virion. The egress of newly formed virions occurs through an exosome-like mechanism involving endosomal budding of viral capsids into multivesicular bodies.</text>
</comment>
<comment type="subcellular location">
    <molecule>Protein 2B</molecule>
    <subcellularLocation>
        <location evidence="4">Host membrane</location>
        <topology evidence="4">Peripheral membrane protein</topology>
    </subcellularLocation>
    <text evidence="4">Probably localizes to intracellular membrane vesicles that are induced after virus infection as the site for viral RNA replication.</text>
</comment>
<comment type="subcellular location">
    <molecule>Protein 2C</molecule>
    <subcellularLocation>
        <location evidence="4">Host membrane</location>
        <topology evidence="4">Single-pass membrane protein</topology>
    </subcellularLocation>
    <text evidence="4">Probably localizes to intracellular membrane vesicles that are induced after virus infection as the site for viral RNA replication. May associate with membranes through a N-terminal amphipathic helix.</text>
</comment>
<comment type="subcellular location">
    <molecule>Protein 3ABC</molecule>
    <subcellularLocation>
        <location evidence="4">Host membrane</location>
        <topology evidence="5">Single-pass membrane protein</topology>
    </subcellularLocation>
    <subcellularLocation>
        <location evidence="4">Host mitochondrion outer membrane</location>
        <topology evidence="4">Single-pass membrane protein</topology>
    </subcellularLocation>
    <text evidence="4">Probably localizes to intracellular membrane vesicles that are induced after virus infection as the site for viral RNA replication.</text>
</comment>
<comment type="subcellular location">
    <molecule>Protein 3AB</molecule>
    <subcellularLocation>
        <location evidence="4">Host membrane</location>
        <topology evidence="5">Single-pass membrane protein</topology>
    </subcellularLocation>
    <text evidence="4">Probably localizes to intracellular membrane vesicles that are induced after virus infection as the site for viral RNA replication.</text>
</comment>
<comment type="subcellular location">
    <molecule>Protein 3A</molecule>
    <subcellularLocation>
        <location evidence="4">Host membrane</location>
        <topology evidence="5">Single-pass membrane protein</topology>
    </subcellularLocation>
    <text evidence="4">Probably localizes to intracellular membrane vesicles that are induced after virus infection as the site for viral RNA replication.</text>
</comment>
<comment type="subcellular location">
    <molecule>Viral protein genome-linked</molecule>
    <subcellularLocation>
        <location evidence="4">Virion</location>
    </subcellularLocation>
</comment>
<comment type="subcellular location">
    <molecule>Protease 3C</molecule>
    <subcellularLocation>
        <location evidence="4">Host cytoplasm</location>
    </subcellularLocation>
</comment>
<comment type="subcellular location">
    <molecule>RNA-directed RNA polymerase 3D-POL</molecule>
    <subcellularLocation>
        <location evidence="4">Host cytoplasmic vesicle membrane</location>
        <topology evidence="4">Peripheral membrane protein</topology>
        <orientation evidence="4">Cytoplasmic side</orientation>
    </subcellularLocation>
    <text evidence="4">Interacts with membranes in a complex with viral protein 3AB. Probably localizes to the surface of intracellular membrane vesicles that are induced after virus infection as the site for viral RNA replication. These vesicles are derived from the endoplasmic reticulum.</text>
</comment>
<comment type="domain">
    <molecule>Protein VP1-2A</molecule>
    <text evidence="4">The assembly signal 2A region mediates pentamerization of P1-2A.</text>
</comment>
<comment type="domain">
    <molecule>Genome polyprotein</molecule>
    <text evidence="4">Late-budding domains (L domains) are short sequence motifs essential for viral particle budding. They recruit proteins of the host ESCRT machinery (Endosomal Sorting Complex Required for Transport) or ESCRT-associated proteins. The genome polyprotein contains two L domains: a tandem of (L)YPX(n)L domain which is known to bind the PDCD6IP/ALIX adaptater protein.</text>
</comment>
<comment type="domain">
    <molecule>Capsid protein VP2</molecule>
    <text evidence="4">Late-budding domains (L domains) are short sequence motifs essential for viral particle budding. They recruit proteins of the host ESCRT machinery (Endosomal Sorting Complex Required for Transport) or ESCRT-associated proteins. Capsid protein VP2 contains two L domains: a tandem of (L)YPX(n)L domain which is known to bind the Alix adaptater protein.</text>
</comment>
<comment type="domain">
    <molecule>Protein 2B</molecule>
    <text evidence="4">The C-terminus displays a membrane-penetrating ability.</text>
</comment>
<comment type="PTM">
    <molecule>Genome polyprotein</molecule>
    <text evidence="4">Specific enzymatic cleavages by viral protease in vivo yield a variety of precursors and mature proteins. Polyprotein processing intermediates are produced, such as P1-2A which is a functional precursor of the structural proteins, VP0 which is a VP4-VP2 precursor, VP1-2A precursor, 3ABC precursor which is a stable and catalytically active precursor of 3A, 3B and 3C proteins, 3AB and 3CD precursors. The assembly signal 2A is removed from VP1-2A by a host protease, possibly host Cathepsin L. This cleavage occurs over a region of 3 amino-acids probably generating VP1 proteins with heterogeneous C-termini.</text>
</comment>
<comment type="PTM">
    <molecule>Capsid protein VP0</molecule>
    <text evidence="3">During virion maturation, immature virions are rendered infectious following cleavage of VP0 into VP4 and VP2. This maturation seems to be an autocatalytic event triggered by the presence of RNA in the capsid and is followed by a conformational change of the particle.</text>
</comment>
<comment type="PTM">
    <molecule>Protein VP1-2A</molecule>
    <text evidence="4">The assembly signal 2A is removed from VP1-2A by a host protease, possibly host Cathepsin L in naked virions. This cleavage does not occur in enveloped virions. This cleavage occurs over a region of 3 amino-acids probably generating VP1 proteins with heterogeneous C-termini.</text>
</comment>
<comment type="PTM">
    <molecule>Viral protein genome-linked</molecule>
    <text evidence="2">VPg is uridylylated prior to priming replication into VPg-pUpU.</text>
</comment>
<comment type="PTM">
    <molecule>Capsid protein VP4</molecule>
    <text evidence="4">Unlike other picornaviruses, does not seem to be myristoylated.</text>
</comment>
<comment type="miscellaneous">
    <molecule>Genome polyprotein</molecule>
    <text evidence="4">The need for an intact eIF4G factor for the initiation of translation of HAV results in an inability to shut off host protein synthesis by a mechanism similar to that of other picornaviruses.</text>
</comment>
<comment type="miscellaneous">
    <molecule>Genome polyprotein</molecule>
    <text evidence="4">During infection, enveloped virions (eHAV) are released from cells. These eHAV are cloaked in host-derived membranes and resemble exosomes. The membrane of eHAV is devoid of viral proteins and thus prevents their neutralization by antibodies. eHAV budding is dependent on ESCRT-associated proteins VPS4B and PDCD6IP/ALIX. eHAV are produced and released in the serum and plasma, but not in bile and feces which only contain the naked, nonenveloped virions. It is likely that eHAV also use HAVCR1 as a functional receptor to infect cells, an evolutionary trait that may enhance HAV infectivity.</text>
</comment>
<comment type="similarity">
    <text evidence="10">Belongs to the picornaviridae polyprotein family.</text>
</comment>
<comment type="caution">
    <text evidence="4">It is uncertain whether Met-1 or Met-3 is the initiator.</text>
</comment>
<comment type="sequence caution" evidence="10">
    <conflict type="erroneous initiation">
        <sequence resource="EMBL-CDS" id="CAC14074"/>
    </conflict>
    <text>Truncated N-terminus.</text>
</comment>
<reference key="1">
    <citation type="journal article" date="2005" name="J. Gen. Virol.">
        <title>Characterization and genetic variability of Hepatitis A virus genotype IIIA.</title>
        <authorList>
            <person name="Stene-Johansen K."/>
            <person name="Jonassen T.O."/>
            <person name="Skaug K."/>
        </authorList>
    </citation>
    <scope>NUCLEOTIDE SEQUENCE [GENOMIC RNA]</scope>
</reference>
<proteinExistence type="inferred from homology"/>
<protein>
    <recommendedName>
        <fullName>Genome polyprotein</fullName>
    </recommendedName>
    <component>
        <recommendedName>
            <fullName>Capsid protein VP0</fullName>
        </recommendedName>
        <alternativeName>
            <fullName>VP4-VP2</fullName>
        </alternativeName>
    </component>
    <component>
        <recommendedName>
            <fullName>Capsid protein VP4</fullName>
        </recommendedName>
        <alternativeName>
            <fullName>P1A</fullName>
        </alternativeName>
        <alternativeName>
            <fullName>Virion protein 4</fullName>
        </alternativeName>
    </component>
    <component>
        <recommendedName>
            <fullName>Capsid protein VP2</fullName>
        </recommendedName>
        <alternativeName>
            <fullName>P1B</fullName>
        </alternativeName>
        <alternativeName>
            <fullName>Virion protein 2</fullName>
        </alternativeName>
    </component>
    <component>
        <recommendedName>
            <fullName>Capsid protein VP3</fullName>
        </recommendedName>
        <alternativeName>
            <fullName>P1C</fullName>
        </alternativeName>
        <alternativeName>
            <fullName>Virion protein 3</fullName>
        </alternativeName>
    </component>
    <component>
        <recommendedName>
            <fullName>Protein VP1-2A</fullName>
        </recommendedName>
        <alternativeName>
            <fullName>VPX</fullName>
        </alternativeName>
    </component>
    <component>
        <recommendedName>
            <fullName>Capsid protein VP1</fullName>
        </recommendedName>
        <alternativeName>
            <fullName>P1D</fullName>
        </alternativeName>
        <alternativeName>
            <fullName>Virion protein 1</fullName>
        </alternativeName>
    </component>
    <component>
        <recommendedName>
            <fullName>Assembly signal 2A</fullName>
        </recommendedName>
        <alternativeName>
            <fullName evidence="4">pX</fullName>
        </alternativeName>
    </component>
    <component>
        <recommendedName>
            <fullName>Protein 2BC</fullName>
        </recommendedName>
    </component>
    <component>
        <recommendedName>
            <fullName>Protein 2B</fullName>
            <shortName>P2B</shortName>
        </recommendedName>
    </component>
    <component>
        <recommendedName>
            <fullName>Protein 2C</fullName>
            <shortName>P2C</shortName>
            <ecNumber>3.6.1.15</ecNumber>
        </recommendedName>
    </component>
    <component>
        <recommendedName>
            <fullName>Protein 3ABCD</fullName>
            <shortName>P3</shortName>
        </recommendedName>
    </component>
    <component>
        <recommendedName>
            <fullName>Protein 3ABC</fullName>
        </recommendedName>
    </component>
    <component>
        <recommendedName>
            <fullName>Protein 3AB</fullName>
        </recommendedName>
    </component>
    <component>
        <recommendedName>
            <fullName>Protein 3A</fullName>
            <shortName>P3A</shortName>
        </recommendedName>
    </component>
    <component>
        <recommendedName>
            <fullName>Viral protein genome-linked</fullName>
            <shortName>VPg</shortName>
        </recommendedName>
        <alternativeName>
            <fullName>Protein 3B</fullName>
            <shortName>P3B</shortName>
        </alternativeName>
    </component>
    <component>
        <recommendedName>
            <fullName>Protein 3CD</fullName>
        </recommendedName>
    </component>
    <component>
        <recommendedName>
            <fullName>Protease 3C</fullName>
            <shortName>P3C</shortName>
            <ecNumber evidence="4">3.4.22.28</ecNumber>
        </recommendedName>
        <alternativeName>
            <fullName>Picornain 3C</fullName>
        </alternativeName>
    </component>
    <component>
        <recommendedName>
            <fullName>RNA-directed RNA polymerase 3D-POL</fullName>
            <shortName>P3D-POL</shortName>
            <ecNumber evidence="4">2.7.7.48</ecNumber>
        </recommendedName>
    </component>
</protein>
<feature type="chain" id="PRO_0000455811" description="Genome polyprotein">
    <location>
        <begin position="1"/>
        <end position="2228"/>
    </location>
</feature>
<feature type="chain" id="PRO_0000310674" description="Capsid protein VP0">
    <location>
        <begin position="1"/>
        <end position="245"/>
    </location>
</feature>
<feature type="chain" id="PRO_0000310675" description="Capsid protein VP4">
    <location>
        <begin position="1"/>
        <end position="23"/>
    </location>
</feature>
<feature type="chain" id="PRO_0000310676" description="Capsid protein VP2">
    <location>
        <begin position="24"/>
        <end position="245"/>
    </location>
</feature>
<feature type="chain" id="PRO_0000310677" description="Capsid protein VP3">
    <location>
        <begin position="246"/>
        <end position="491"/>
    </location>
</feature>
<feature type="chain" id="PRO_0000310678" description="Protein VP1-2A">
    <location>
        <begin position="492"/>
        <end position="836"/>
    </location>
</feature>
<feature type="chain" id="PRO_0000310679" description="Capsid protein VP1">
    <location>
        <begin position="492"/>
        <end position="765"/>
    </location>
</feature>
<feature type="chain" id="PRO_0000310680" description="Assembly signal 2A">
    <location>
        <begin position="766"/>
        <end position="836"/>
    </location>
</feature>
<feature type="chain" id="PRO_0000310681" description="Protein 2BC">
    <location>
        <begin position="837"/>
        <end position="1422"/>
    </location>
</feature>
<feature type="chain" id="PRO_0000310682" description="Protein 2B">
    <location>
        <begin position="837"/>
        <end position="1087"/>
    </location>
</feature>
<feature type="chain" id="PRO_0000310683" description="Protein 2C">
    <location>
        <begin position="1088"/>
        <end position="1422"/>
    </location>
</feature>
<feature type="chain" id="PRO_5000066775" description="Protein 3ABCD">
    <location>
        <begin position="1423"/>
        <end position="2228"/>
    </location>
</feature>
<feature type="chain" id="PRO_0000310684" description="Protein 3ABC">
    <location>
        <begin position="1423"/>
        <end position="1739"/>
    </location>
</feature>
<feature type="chain" id="PRO_0000310685" description="Protein 3AB">
    <location>
        <begin position="1423"/>
        <end position="1519"/>
    </location>
</feature>
<feature type="chain" id="PRO_0000310686" description="Protein 3A">
    <location>
        <begin position="1423"/>
        <end position="1496"/>
    </location>
</feature>
<feature type="chain" id="PRO_0000310687" description="Viral protein genome-linked">
    <location>
        <begin position="1497"/>
        <end position="1519"/>
    </location>
</feature>
<feature type="chain" id="PRO_0000310688" description="Protein 3CD">
    <location>
        <begin position="1520"/>
        <end position="2228"/>
    </location>
</feature>
<feature type="chain" id="PRO_0000310689" description="Protease 3C">
    <location>
        <begin position="1520"/>
        <end position="1739"/>
    </location>
</feature>
<feature type="chain" id="PRO_0000310690" description="RNA-directed RNA polymerase 3D-POL">
    <location>
        <begin position="1740"/>
        <end position="2228"/>
    </location>
</feature>
<feature type="transmembrane region" description="Helical" evidence="5">
    <location>
        <begin position="1011"/>
        <end position="1031"/>
    </location>
</feature>
<feature type="transmembrane region" description="Helical" evidence="5">
    <location>
        <begin position="1462"/>
        <end position="1482"/>
    </location>
</feature>
<feature type="domain" description="SF3 helicase" evidence="7">
    <location>
        <begin position="1204"/>
        <end position="1366"/>
    </location>
</feature>
<feature type="domain" description="Peptidase C3" evidence="8">
    <location>
        <begin position="1514"/>
        <end position="1728"/>
    </location>
</feature>
<feature type="domain" description="RdRp catalytic" evidence="6">
    <location>
        <begin position="1977"/>
        <end position="2098"/>
    </location>
</feature>
<feature type="region of interest" description="Disordered" evidence="9">
    <location>
        <begin position="55"/>
        <end position="76"/>
    </location>
</feature>
<feature type="region of interest" description="Involved in P1-2A pentamerization" evidence="4">
    <location>
        <begin position="766"/>
        <end position="836"/>
    </location>
</feature>
<feature type="region of interest" description="Membrane-penetrating ability" evidence="4">
    <location>
        <begin position="1043"/>
        <end position="1070"/>
    </location>
</feature>
<feature type="coiled-coil region" evidence="5">
    <location>
        <begin position="1127"/>
        <end position="1153"/>
    </location>
</feature>
<feature type="short sequence motif" description="(L)YPX(n)L motif" evidence="4">
    <location>
        <begin position="167"/>
        <end position="171"/>
    </location>
</feature>
<feature type="short sequence motif" description="(L)YPX(n)L motif" evidence="4">
    <location>
        <begin position="200"/>
        <end position="205"/>
    </location>
</feature>
<feature type="active site" description="For protease 3C activity" evidence="8">
    <location>
        <position position="1563"/>
    </location>
</feature>
<feature type="active site" description="For protease 3C activity" evidence="8">
    <location>
        <position position="1603"/>
    </location>
</feature>
<feature type="active site" description="For protease 3C activity" evidence="8">
    <location>
        <position position="1691"/>
    </location>
</feature>
<feature type="binding site" evidence="7">
    <location>
        <begin position="1230"/>
        <end position="1237"/>
    </location>
    <ligand>
        <name>ATP</name>
        <dbReference type="ChEBI" id="CHEBI:30616"/>
    </ligand>
</feature>
<feature type="site" description="Cleavage" evidence="5">
    <location>
        <begin position="23"/>
        <end position="24"/>
    </location>
</feature>
<feature type="site" description="Cleavage; by protease 3C" evidence="4">
    <location>
        <begin position="245"/>
        <end position="246"/>
    </location>
</feature>
<feature type="site" description="Cleavage; by protease 3C" evidence="4">
    <location>
        <begin position="491"/>
        <end position="492"/>
    </location>
</feature>
<feature type="site" description="Cleavage; partial; by host" evidence="4">
    <location>
        <begin position="765"/>
        <end position="766"/>
    </location>
</feature>
<feature type="site" description="Important for VP1 folding and capsid assembly" evidence="4">
    <location>
        <position position="769"/>
    </location>
</feature>
<feature type="site" description="Cleavage; by protease 3C" evidence="4">
    <location>
        <begin position="836"/>
        <end position="837"/>
    </location>
</feature>
<feature type="site" description="Cleavage; by protease 3C" evidence="4">
    <location>
        <begin position="1087"/>
        <end position="1088"/>
    </location>
</feature>
<feature type="site" description="Cleavage; by protease 3C" evidence="4">
    <location>
        <begin position="1422"/>
        <end position="1423"/>
    </location>
</feature>
<feature type="site" description="Cleavage; by protease 3C" evidence="4">
    <location>
        <begin position="1496"/>
        <end position="1497"/>
    </location>
</feature>
<feature type="site" description="Cleavage; by protease 3C" evidence="4">
    <location>
        <begin position="1519"/>
        <end position="1520"/>
    </location>
</feature>
<feature type="site" description="Cleavage; by protease 3C" evidence="4">
    <location>
        <begin position="1739"/>
        <end position="1740"/>
    </location>
</feature>
<feature type="modified residue" description="O-(5'-phospho-RNA)-tyrosine" evidence="1">
    <location>
        <position position="1499"/>
    </location>
</feature>
<feature type="disulfide bond" description="Interchain" evidence="4">
    <location>
        <position position="1543"/>
    </location>
</feature>
<name>POLG_HAVNO</name>
<organism>
    <name type="scientific">Human hepatitis A virus genotype IIIA (isolate NOR-21)</name>
    <name type="common">HHAV</name>
    <name type="synonym">Human hepatitis A virus (isolate Human/Norway/NOR-21/1998)</name>
    <dbReference type="NCBI Taxonomy" id="470593"/>
    <lineage>
        <taxon>Viruses</taxon>
        <taxon>Riboviria</taxon>
        <taxon>Orthornavirae</taxon>
        <taxon>Pisuviricota</taxon>
        <taxon>Pisoniviricetes</taxon>
        <taxon>Picornavirales</taxon>
        <taxon>Picornaviridae</taxon>
        <taxon>Heptrevirinae</taxon>
        <taxon>Hepatovirus</taxon>
        <taxon>Hepatovirus ahepa</taxon>
        <taxon>Hepatovirus A</taxon>
    </lineage>
</organism>
<organismHost>
    <name type="scientific">Homo sapiens</name>
    <name type="common">Human</name>
    <dbReference type="NCBI Taxonomy" id="9606"/>
</organismHost>
<keyword id="KW-0067">ATP-binding</keyword>
<keyword id="KW-0167">Capsid protein</keyword>
<keyword id="KW-0175">Coiled coil</keyword>
<keyword id="KW-0191">Covalent protein-RNA linkage</keyword>
<keyword id="KW-1015">Disulfide bond</keyword>
<keyword id="KW-0347">Helicase</keyword>
<keyword id="KW-1035">Host cytoplasm</keyword>
<keyword id="KW-1036">Host cytoplasmic vesicle</keyword>
<keyword id="KW-1039">Host endosome</keyword>
<keyword id="KW-1043">Host membrane</keyword>
<keyword id="KW-1045">Host mitochondrion</keyword>
<keyword id="KW-1047">Host mitochondrion outer membrane</keyword>
<keyword id="KW-0945">Host-virus interaction</keyword>
<keyword id="KW-0378">Hydrolase</keyword>
<keyword id="KW-1090">Inhibition of host innate immune response by virus</keyword>
<keyword id="KW-1097">Inhibition of host MAVS by virus</keyword>
<keyword id="KW-1113">Inhibition of host RLR pathway by virus</keyword>
<keyword id="KW-0922">Interferon antiviral system evasion</keyword>
<keyword id="KW-0407">Ion channel</keyword>
<keyword id="KW-0406">Ion transport</keyword>
<keyword id="KW-0472">Membrane</keyword>
<keyword id="KW-0547">Nucleotide-binding</keyword>
<keyword id="KW-0548">Nucleotidyltransferase</keyword>
<keyword id="KW-0597">Phosphoprotein</keyword>
<keyword id="KW-0645">Protease</keyword>
<keyword id="KW-0694">RNA-binding</keyword>
<keyword id="KW-0696">RNA-directed RNA polymerase</keyword>
<keyword id="KW-1143">T=pseudo3 icosahedral capsid protein</keyword>
<keyword id="KW-0788">Thiol protease</keyword>
<keyword id="KW-0808">Transferase</keyword>
<keyword id="KW-0812">Transmembrane</keyword>
<keyword id="KW-1133">Transmembrane helix</keyword>
<keyword id="KW-0813">Transport</keyword>
<keyword id="KW-1161">Viral attachment to host cell</keyword>
<keyword id="KW-0899">Viral immunoevasion</keyword>
<keyword id="KW-1182">Viral ion channel</keyword>
<keyword id="KW-0693">Viral RNA replication</keyword>
<keyword id="KW-0946">Virion</keyword>
<keyword id="KW-1160">Virus entry into host cell</keyword>
<evidence type="ECO:0000250" key="1"/>
<evidence type="ECO:0000250" key="2">
    <source>
        <dbReference type="UniProtKB" id="P03300"/>
    </source>
</evidence>
<evidence type="ECO:0000250" key="3">
    <source>
        <dbReference type="UniProtKB" id="P03303"/>
    </source>
</evidence>
<evidence type="ECO:0000250" key="4">
    <source>
        <dbReference type="UniProtKB" id="P08617"/>
    </source>
</evidence>
<evidence type="ECO:0000255" key="5"/>
<evidence type="ECO:0000255" key="6">
    <source>
        <dbReference type="PROSITE-ProRule" id="PRU00539"/>
    </source>
</evidence>
<evidence type="ECO:0000255" key="7">
    <source>
        <dbReference type="PROSITE-ProRule" id="PRU00551"/>
    </source>
</evidence>
<evidence type="ECO:0000255" key="8">
    <source>
        <dbReference type="PROSITE-ProRule" id="PRU01222"/>
    </source>
</evidence>
<evidence type="ECO:0000256" key="9">
    <source>
        <dbReference type="SAM" id="MobiDB-lite"/>
    </source>
</evidence>
<evidence type="ECO:0000305" key="10"/>
<sequence>MNMSRQGIFQTVGSGLDHILSLADVEEEQMIQSVDRTAVTGASYFTSVDQSSVHTAEVGSHQPEPLKTSVDKPGSKRTQGEKFFLIHSADWLTTHALFHEVAKLDVVKLLYNEQFAVQGLLRYHTYARFGIEIQVQINPTPFQQGGLICAMVPGDQSYGSIASLTVYPHGLLNCNINNVVRIKVPFIYTRGAYHFKDPQYPVWELTIRVWSELNIGTGTSAYTSLNVLARFTDLELHGLTPLSTQMMRNEFRVSTTENVVNLSNYEDARAKMSFALDQEDWKSDASQGGGIKITHFTTWTSIPTLAAQFPFNASDSVGQQIKVIPVDPYFFQMTNTNPEQKCITALASICQMFCFWRGDLVFDFQVFPTKYHSGRLLFCFVPGNELIDVSHITLKQATTAPCAVMDITGVQSTLRFRVPWISDTPYRVNRYTKSSHQKGEYTAIGKLIVYCYNRLTSPSNVASHVRVNVYLSAINLECFAPLYHAMDVTTQVGDDSGGFSTTVSTKQNVPDPQVGITTVKDLKGRANQGKMDISGVQAPVGAITTIEDPVLAKKVPETFPELKPGESRHTSDHMSIYKFMGRSHFLCTFTFNSNNKEYTFPITLSSTSNPPHGLPSTLRWFFNLFQLYRGPLDLTIIITGATDVDGMAWFTPVGLAVDTPWVEKESALSIDYKTALGAVRFNTRRTGNIQIRLPWYSYLYAVSGALDGLGDKTDSTFGLVSIQIANYNHSDEYLSFSCYLSVTEQSEFYFPRAPLNTNAMMSSETMMDRIALGDLESSVDDPRSEEDRKFESHIEKRKPYKELRLEVGKQRLKYAQEELSNEVLPPPRKIKGVFSQAKISLFYTEDHEIMKFSWKGITADTRALRRFGFSLAAGRSVWTLEMDAGVLTGRLVRVNDEKWTEMKDDKIVSLVEKFTSNKHWSKVNFPHGMLDLEEIAANAKEFPNMSETDLCFLLHWLNPKKINLADRMLGLSGIQEIKEKGVGLIGECRAFLDSITSTLKSMMFGFHHSVTVEIINTVLCFVKSGILLYVIQQLNQEEHSHIIGLLRVMNYADIGCSVISCGKVFSKMLETVFNWQMDSRMMELRTQSISNWLRDICSGITIFKSFKDAIYWLYTKIREYYDLNYGNKKDVLNILKDHQQKIERAIEEADNFCVLQIQDVEKFEQYQKGVDLIQKLRTVHSMAQVDPGLTVHLAPLRDCIARVHQKLKNLGSINQAMVPRCEPVVCYLYGKRGGGKSLTSIALATKICKHYGVEPEKNIYTKPVASDYWDGYSGQLVCIIDDIGQNTTDEDWSDFCQLVSGCPMRLNMASLEEKGRHFSSPFIIATSNWSNPSPKTVYVKEAIDRRLHFKVEVKPASFFKNPHNDMLNVNLAKTNDAIKDMSCVDLVMDNHNVSLSELLSSLVMTVEIRKQNMSEFMELWSQGLSDDDNDSAVAEFFQSFPSGEPSGSRLSQFFQSVTNHKWVAVGAAVGVLGVLVGGWYVYKHFTKKQEESIPSEGVYHGVTKPKQVIKLDADPVESQSTLEIAGLVRKNLVQFGVGEKNGCVRWVMNALGIKDDWLLVPSHAYKFEKDYEMMEFYFNRGGTYYSISAGNVVIQSLDVGFQDVVLMKVPTIPKFRDITEHFIKKSDVPRALNRLATLVTTVNGTPMLISEGPLKMEEKATYVHKKNDGTTIDLTVDQAWRGKGEGLPGMCGGALISSNQSIQNAILGIHVAGGNSILVAKLVTQEMFQNIDKKIVESQRIMKVEFTQCSMNVVSKTLFRKSPIHHHIDKNMINFPAVMPFSRAEIDPMAVMLSKYSLPIVDEPDDYKDVSVFFQNKILGKSPLVDDFLDIEMAITGAPGIDAINMDSSPGYPYVQEKLTKRDLIWLDDNGMFLGLHPRLAQRILFNTTMMENCSDLDVVFTTCPKDELRPLDKVLESKTRAIDSCPLDYTILCRMYWGPAISYFHLNPGFHTGVAIGIDPDRQWDQLFKTMIRFGDVGLDLDFSAFDASLSPFMIREAGRILTEMSGAPVHFGEALINTIIYSKHLLYNCCYHVCGSMPSGSPCTALLNSIINNVNLYYVFSKIFKKSPVFFCDAVRILCYGDDVLIVFSRQVQIDNLDSIGQRIVDEFKKLGMTATSADKSVPQLKPVSELTFLKRSFNLVEDRIRPAIAEKTIWSLVAWQRNNAEFEQNLENAQWFAFMHGYEFYQQFYHFVQSCLEKEMIEYRLKSYDWWRMKFNDQCFVCDLS</sequence>